<sequence length="457" mass="50798">MTKKVYIKTFGCQMNEYDSDKMVDVLNAAEGLEKTDTPEDADIILFNTCSVREKAQEKVFSDLGRVRELKEAKPGLLIGVGGCVASQEGASIVSRAPYVDLVFGPQTLHRLPQMIDQRRASGRAQVDISFPEIEKFDHLPPARVEGPSAFVSIMEGCSKYCSYCVVPYTRGDEVSRPLDDVLTEVAGLADQGVREVTLLGQNVNAYRGALTAGSTEIADFATLIEYVADIPGIERIRYTTSHPKEFTQRLIDTYAKVPKLVSHLHLPVQHGSDRILMAMKRGYTVLEYKSVIRKLRAIRPDLSLSTDMIVGFPGETEEDFDKMMALVHEMSYDTSFSFIYSPRPGTPAANLHDDTPREVKLKRLQHLQATIEENVARISRSMVGKVERILVEGPSRKDPNELSGRTENNRVVNFPAPLASHPRLIGQMIDVKINHAYPHSLRGELLLVSDDASAATH</sequence>
<dbReference type="EC" id="2.8.4.3" evidence="1"/>
<dbReference type="EMBL" id="CP001025">
    <property type="protein sequence ID" value="ACB65087.1"/>
    <property type="molecule type" value="Genomic_DNA"/>
</dbReference>
<dbReference type="RefSeq" id="WP_012364659.1">
    <property type="nucleotide sequence ID" value="NC_010551.1"/>
</dbReference>
<dbReference type="SMR" id="B1YWB9"/>
<dbReference type="KEGG" id="bac:BamMC406_2610"/>
<dbReference type="HOGENOM" id="CLU_018697_2_0_4"/>
<dbReference type="OrthoDB" id="9805215at2"/>
<dbReference type="Proteomes" id="UP000001680">
    <property type="component" value="Chromosome 1"/>
</dbReference>
<dbReference type="GO" id="GO:0005829">
    <property type="term" value="C:cytosol"/>
    <property type="evidence" value="ECO:0007669"/>
    <property type="project" value="TreeGrafter"/>
</dbReference>
<dbReference type="GO" id="GO:0051539">
    <property type="term" value="F:4 iron, 4 sulfur cluster binding"/>
    <property type="evidence" value="ECO:0007669"/>
    <property type="project" value="UniProtKB-UniRule"/>
</dbReference>
<dbReference type="GO" id="GO:0046872">
    <property type="term" value="F:metal ion binding"/>
    <property type="evidence" value="ECO:0007669"/>
    <property type="project" value="UniProtKB-KW"/>
</dbReference>
<dbReference type="GO" id="GO:0035597">
    <property type="term" value="F:N6-isopentenyladenosine methylthiotransferase activity"/>
    <property type="evidence" value="ECO:0007669"/>
    <property type="project" value="TreeGrafter"/>
</dbReference>
<dbReference type="CDD" id="cd01335">
    <property type="entry name" value="Radical_SAM"/>
    <property type="match status" value="1"/>
</dbReference>
<dbReference type="FunFam" id="3.40.50.12160:FF:000001">
    <property type="entry name" value="tRNA-2-methylthio-N(6)-dimethylallyladenosine synthase"/>
    <property type="match status" value="1"/>
</dbReference>
<dbReference type="FunFam" id="3.80.30.20:FF:000001">
    <property type="entry name" value="tRNA-2-methylthio-N(6)-dimethylallyladenosine synthase 2"/>
    <property type="match status" value="1"/>
</dbReference>
<dbReference type="Gene3D" id="3.40.50.12160">
    <property type="entry name" value="Methylthiotransferase, N-terminal domain"/>
    <property type="match status" value="1"/>
</dbReference>
<dbReference type="Gene3D" id="3.80.30.20">
    <property type="entry name" value="tm_1862 like domain"/>
    <property type="match status" value="1"/>
</dbReference>
<dbReference type="HAMAP" id="MF_01864">
    <property type="entry name" value="tRNA_metthiotr_MiaB"/>
    <property type="match status" value="1"/>
</dbReference>
<dbReference type="InterPro" id="IPR006638">
    <property type="entry name" value="Elp3/MiaA/NifB-like_rSAM"/>
</dbReference>
<dbReference type="InterPro" id="IPR005839">
    <property type="entry name" value="Methylthiotransferase"/>
</dbReference>
<dbReference type="InterPro" id="IPR020612">
    <property type="entry name" value="Methylthiotransferase_CS"/>
</dbReference>
<dbReference type="InterPro" id="IPR013848">
    <property type="entry name" value="Methylthiotransferase_N"/>
</dbReference>
<dbReference type="InterPro" id="IPR038135">
    <property type="entry name" value="Methylthiotransferase_N_sf"/>
</dbReference>
<dbReference type="InterPro" id="IPR006463">
    <property type="entry name" value="MiaB_methiolase"/>
</dbReference>
<dbReference type="InterPro" id="IPR007197">
    <property type="entry name" value="rSAM"/>
</dbReference>
<dbReference type="InterPro" id="IPR023404">
    <property type="entry name" value="rSAM_horseshoe"/>
</dbReference>
<dbReference type="InterPro" id="IPR002792">
    <property type="entry name" value="TRAM_dom"/>
</dbReference>
<dbReference type="NCBIfam" id="TIGR01574">
    <property type="entry name" value="miaB-methiolase"/>
    <property type="match status" value="1"/>
</dbReference>
<dbReference type="NCBIfam" id="TIGR00089">
    <property type="entry name" value="MiaB/RimO family radical SAM methylthiotransferase"/>
    <property type="match status" value="1"/>
</dbReference>
<dbReference type="PANTHER" id="PTHR43020">
    <property type="entry name" value="CDK5 REGULATORY SUBUNIT-ASSOCIATED PROTEIN 1"/>
    <property type="match status" value="1"/>
</dbReference>
<dbReference type="PANTHER" id="PTHR43020:SF2">
    <property type="entry name" value="MITOCHONDRIAL TRNA METHYLTHIOTRANSFERASE CDK5RAP1"/>
    <property type="match status" value="1"/>
</dbReference>
<dbReference type="Pfam" id="PF04055">
    <property type="entry name" value="Radical_SAM"/>
    <property type="match status" value="1"/>
</dbReference>
<dbReference type="Pfam" id="PF01938">
    <property type="entry name" value="TRAM"/>
    <property type="match status" value="1"/>
</dbReference>
<dbReference type="Pfam" id="PF00919">
    <property type="entry name" value="UPF0004"/>
    <property type="match status" value="1"/>
</dbReference>
<dbReference type="SFLD" id="SFLDF00273">
    <property type="entry name" value="(dimethylallyl)adenosine_tRNA"/>
    <property type="match status" value="1"/>
</dbReference>
<dbReference type="SFLD" id="SFLDG01082">
    <property type="entry name" value="B12-binding_domain_containing"/>
    <property type="match status" value="1"/>
</dbReference>
<dbReference type="SFLD" id="SFLDG01061">
    <property type="entry name" value="methylthiotransferase"/>
    <property type="match status" value="1"/>
</dbReference>
<dbReference type="SMART" id="SM00729">
    <property type="entry name" value="Elp3"/>
    <property type="match status" value="1"/>
</dbReference>
<dbReference type="SUPFAM" id="SSF102114">
    <property type="entry name" value="Radical SAM enzymes"/>
    <property type="match status" value="1"/>
</dbReference>
<dbReference type="PROSITE" id="PS51449">
    <property type="entry name" value="MTTASE_N"/>
    <property type="match status" value="1"/>
</dbReference>
<dbReference type="PROSITE" id="PS01278">
    <property type="entry name" value="MTTASE_RADICAL"/>
    <property type="match status" value="1"/>
</dbReference>
<dbReference type="PROSITE" id="PS51918">
    <property type="entry name" value="RADICAL_SAM"/>
    <property type="match status" value="1"/>
</dbReference>
<dbReference type="PROSITE" id="PS50926">
    <property type="entry name" value="TRAM"/>
    <property type="match status" value="1"/>
</dbReference>
<reference key="1">
    <citation type="submission" date="2008-04" db="EMBL/GenBank/DDBJ databases">
        <title>Complete sequence of chromosome 1 of Burkholderia ambifaria MC40-6.</title>
        <authorList>
            <person name="Copeland A."/>
            <person name="Lucas S."/>
            <person name="Lapidus A."/>
            <person name="Glavina del Rio T."/>
            <person name="Dalin E."/>
            <person name="Tice H."/>
            <person name="Pitluck S."/>
            <person name="Chain P."/>
            <person name="Malfatti S."/>
            <person name="Shin M."/>
            <person name="Vergez L."/>
            <person name="Lang D."/>
            <person name="Schmutz J."/>
            <person name="Larimer F."/>
            <person name="Land M."/>
            <person name="Hauser L."/>
            <person name="Kyrpides N."/>
            <person name="Lykidis A."/>
            <person name="Ramette A."/>
            <person name="Konstantinidis K."/>
            <person name="Tiedje J."/>
            <person name="Richardson P."/>
        </authorList>
    </citation>
    <scope>NUCLEOTIDE SEQUENCE [LARGE SCALE GENOMIC DNA]</scope>
    <source>
        <strain>MC40-6</strain>
    </source>
</reference>
<organism>
    <name type="scientific">Burkholderia ambifaria (strain MC40-6)</name>
    <dbReference type="NCBI Taxonomy" id="398577"/>
    <lineage>
        <taxon>Bacteria</taxon>
        <taxon>Pseudomonadati</taxon>
        <taxon>Pseudomonadota</taxon>
        <taxon>Betaproteobacteria</taxon>
        <taxon>Burkholderiales</taxon>
        <taxon>Burkholderiaceae</taxon>
        <taxon>Burkholderia</taxon>
        <taxon>Burkholderia cepacia complex</taxon>
    </lineage>
</organism>
<accession>B1YWB9</accession>
<keyword id="KW-0004">4Fe-4S</keyword>
<keyword id="KW-0963">Cytoplasm</keyword>
<keyword id="KW-0408">Iron</keyword>
<keyword id="KW-0411">Iron-sulfur</keyword>
<keyword id="KW-0479">Metal-binding</keyword>
<keyword id="KW-0949">S-adenosyl-L-methionine</keyword>
<keyword id="KW-0808">Transferase</keyword>
<keyword id="KW-0819">tRNA processing</keyword>
<protein>
    <recommendedName>
        <fullName evidence="1">tRNA-2-methylthio-N(6)-dimethylallyladenosine synthase</fullName>
        <ecNumber evidence="1">2.8.4.3</ecNumber>
    </recommendedName>
    <alternativeName>
        <fullName evidence="1">(Dimethylallyl)adenosine tRNA methylthiotransferase MiaB</fullName>
    </alternativeName>
    <alternativeName>
        <fullName evidence="1">tRNA-i(6)A37 methylthiotransferase</fullName>
    </alternativeName>
</protein>
<name>MIAB_BURA4</name>
<evidence type="ECO:0000255" key="1">
    <source>
        <dbReference type="HAMAP-Rule" id="MF_01864"/>
    </source>
</evidence>
<evidence type="ECO:0000255" key="2">
    <source>
        <dbReference type="PROSITE-ProRule" id="PRU01266"/>
    </source>
</evidence>
<feature type="chain" id="PRO_0000374173" description="tRNA-2-methylthio-N(6)-dimethylallyladenosine synthase">
    <location>
        <begin position="1"/>
        <end position="457"/>
    </location>
</feature>
<feature type="domain" description="MTTase N-terminal" evidence="1">
    <location>
        <begin position="3"/>
        <end position="120"/>
    </location>
</feature>
<feature type="domain" description="Radical SAM core" evidence="2">
    <location>
        <begin position="143"/>
        <end position="377"/>
    </location>
</feature>
<feature type="domain" description="TRAM" evidence="1">
    <location>
        <begin position="380"/>
        <end position="447"/>
    </location>
</feature>
<feature type="binding site" evidence="1">
    <location>
        <position position="12"/>
    </location>
    <ligand>
        <name>[4Fe-4S] cluster</name>
        <dbReference type="ChEBI" id="CHEBI:49883"/>
        <label>1</label>
    </ligand>
</feature>
<feature type="binding site" evidence="1">
    <location>
        <position position="49"/>
    </location>
    <ligand>
        <name>[4Fe-4S] cluster</name>
        <dbReference type="ChEBI" id="CHEBI:49883"/>
        <label>1</label>
    </ligand>
</feature>
<feature type="binding site" evidence="1">
    <location>
        <position position="83"/>
    </location>
    <ligand>
        <name>[4Fe-4S] cluster</name>
        <dbReference type="ChEBI" id="CHEBI:49883"/>
        <label>1</label>
    </ligand>
</feature>
<feature type="binding site" evidence="1">
    <location>
        <position position="157"/>
    </location>
    <ligand>
        <name>[4Fe-4S] cluster</name>
        <dbReference type="ChEBI" id="CHEBI:49883"/>
        <label>2</label>
        <note>4Fe-4S-S-AdoMet</note>
    </ligand>
</feature>
<feature type="binding site" evidence="1">
    <location>
        <position position="161"/>
    </location>
    <ligand>
        <name>[4Fe-4S] cluster</name>
        <dbReference type="ChEBI" id="CHEBI:49883"/>
        <label>2</label>
        <note>4Fe-4S-S-AdoMet</note>
    </ligand>
</feature>
<feature type="binding site" evidence="1">
    <location>
        <position position="164"/>
    </location>
    <ligand>
        <name>[4Fe-4S] cluster</name>
        <dbReference type="ChEBI" id="CHEBI:49883"/>
        <label>2</label>
        <note>4Fe-4S-S-AdoMet</note>
    </ligand>
</feature>
<comment type="function">
    <text evidence="1">Catalyzes the methylthiolation of N6-(dimethylallyl)adenosine (i(6)A), leading to the formation of 2-methylthio-N6-(dimethylallyl)adenosine (ms(2)i(6)A) at position 37 in tRNAs that read codons beginning with uridine.</text>
</comment>
<comment type="catalytic activity">
    <reaction evidence="1">
        <text>N(6)-dimethylallyladenosine(37) in tRNA + (sulfur carrier)-SH + AH2 + 2 S-adenosyl-L-methionine = 2-methylsulfanyl-N(6)-dimethylallyladenosine(37) in tRNA + (sulfur carrier)-H + 5'-deoxyadenosine + L-methionine + A + S-adenosyl-L-homocysteine + 2 H(+)</text>
        <dbReference type="Rhea" id="RHEA:37067"/>
        <dbReference type="Rhea" id="RHEA-COMP:10375"/>
        <dbReference type="Rhea" id="RHEA-COMP:10376"/>
        <dbReference type="Rhea" id="RHEA-COMP:14737"/>
        <dbReference type="Rhea" id="RHEA-COMP:14739"/>
        <dbReference type="ChEBI" id="CHEBI:13193"/>
        <dbReference type="ChEBI" id="CHEBI:15378"/>
        <dbReference type="ChEBI" id="CHEBI:17319"/>
        <dbReference type="ChEBI" id="CHEBI:17499"/>
        <dbReference type="ChEBI" id="CHEBI:29917"/>
        <dbReference type="ChEBI" id="CHEBI:57844"/>
        <dbReference type="ChEBI" id="CHEBI:57856"/>
        <dbReference type="ChEBI" id="CHEBI:59789"/>
        <dbReference type="ChEBI" id="CHEBI:64428"/>
        <dbReference type="ChEBI" id="CHEBI:74415"/>
        <dbReference type="ChEBI" id="CHEBI:74417"/>
        <dbReference type="EC" id="2.8.4.3"/>
    </reaction>
</comment>
<comment type="cofactor">
    <cofactor evidence="1">
        <name>[4Fe-4S] cluster</name>
        <dbReference type="ChEBI" id="CHEBI:49883"/>
    </cofactor>
    <text evidence="1">Binds 2 [4Fe-4S] clusters. One cluster is coordinated with 3 cysteines and an exchangeable S-adenosyl-L-methionine.</text>
</comment>
<comment type="subunit">
    <text evidence="1">Monomer.</text>
</comment>
<comment type="subcellular location">
    <subcellularLocation>
        <location evidence="1">Cytoplasm</location>
    </subcellularLocation>
</comment>
<comment type="similarity">
    <text evidence="1">Belongs to the methylthiotransferase family. MiaB subfamily.</text>
</comment>
<gene>
    <name evidence="1" type="primary">miaB</name>
    <name type="ordered locus">BamMC406_2610</name>
</gene>
<proteinExistence type="inferred from homology"/>